<dbReference type="EMBL" id="AJ010828">
    <property type="protein sequence ID" value="CAA09370.1"/>
    <property type="molecule type" value="mRNA"/>
</dbReference>
<dbReference type="EMBL" id="AF118816">
    <property type="protein sequence ID" value="AAF34338.1"/>
    <property type="molecule type" value="mRNA"/>
</dbReference>
<dbReference type="EMBL" id="CH473997">
    <property type="protein sequence ID" value="EDL92073.1"/>
    <property type="molecule type" value="Genomic_DNA"/>
</dbReference>
<dbReference type="EMBL" id="CH473997">
    <property type="protein sequence ID" value="EDL92074.1"/>
    <property type="molecule type" value="Genomic_DNA"/>
</dbReference>
<dbReference type="RefSeq" id="NP_445804.1">
    <property type="nucleotide sequence ID" value="NM_053352.2"/>
</dbReference>
<dbReference type="RefSeq" id="XP_006245541.1">
    <property type="nucleotide sequence ID" value="XM_006245479.5"/>
</dbReference>
<dbReference type="RefSeq" id="XP_038940186.1">
    <property type="nucleotide sequence ID" value="XM_039084258.2"/>
</dbReference>
<dbReference type="SMR" id="O89039"/>
<dbReference type="FunCoup" id="O89039">
    <property type="interactions" value="404"/>
</dbReference>
<dbReference type="IntAct" id="O89039">
    <property type="interactions" value="2"/>
</dbReference>
<dbReference type="STRING" id="10116.ENSRNOP00000026558"/>
<dbReference type="BindingDB" id="O89039"/>
<dbReference type="ChEMBL" id="CHEMBL4739671"/>
<dbReference type="GuidetoPHARMACOLOGY" id="80"/>
<dbReference type="GlyCosmos" id="O89039">
    <property type="glycosylation" value="2 sites, No reported glycans"/>
</dbReference>
<dbReference type="GlyGen" id="O89039">
    <property type="glycosylation" value="2 sites"/>
</dbReference>
<dbReference type="iPTMnet" id="O89039"/>
<dbReference type="PhosphoSitePlus" id="O89039"/>
<dbReference type="PaxDb" id="10116-ENSRNOP00000026558"/>
<dbReference type="Ensembl" id="ENSRNOT00000026558.4">
    <property type="protein sequence ID" value="ENSRNOP00000026558.2"/>
    <property type="gene ID" value="ENSRNOG00000019622.4"/>
</dbReference>
<dbReference type="Ensembl" id="ENSRNOT00000098919.1">
    <property type="protein sequence ID" value="ENSRNOP00000091223.1"/>
    <property type="gene ID" value="ENSRNOG00000019622.4"/>
</dbReference>
<dbReference type="Ensembl" id="ENSRNOT00000108608.1">
    <property type="protein sequence ID" value="ENSRNOP00000094961.1"/>
    <property type="gene ID" value="ENSRNOG00000019622.4"/>
</dbReference>
<dbReference type="Ensembl" id="ENSRNOT00000113813.1">
    <property type="protein sequence ID" value="ENSRNOP00000088201.1"/>
    <property type="gene ID" value="ENSRNOG00000019622.4"/>
</dbReference>
<dbReference type="Ensembl" id="ENSRNOT00000115723.1">
    <property type="protein sequence ID" value="ENSRNOP00000086994.1"/>
    <property type="gene ID" value="ENSRNOG00000019622.4"/>
</dbReference>
<dbReference type="Ensembl" id="ENSRNOT00000116518.1">
    <property type="protein sequence ID" value="ENSRNOP00000083985.1"/>
    <property type="gene ID" value="ENSRNOG00000019622.4"/>
</dbReference>
<dbReference type="GeneID" id="84348"/>
<dbReference type="KEGG" id="rno:84348"/>
<dbReference type="UCSC" id="RGD:620601">
    <property type="organism name" value="rat"/>
</dbReference>
<dbReference type="AGR" id="RGD:620601"/>
<dbReference type="CTD" id="57007"/>
<dbReference type="RGD" id="620601">
    <property type="gene designation" value="Ackr3"/>
</dbReference>
<dbReference type="eggNOG" id="KOG3656">
    <property type="taxonomic scope" value="Eukaryota"/>
</dbReference>
<dbReference type="GeneTree" id="ENSGT01110000267168"/>
<dbReference type="HOGENOM" id="CLU_009579_8_3_1"/>
<dbReference type="InParanoid" id="O89039"/>
<dbReference type="OMA" id="CRPVYPP"/>
<dbReference type="OrthoDB" id="5963140at2759"/>
<dbReference type="TreeFam" id="TF333489"/>
<dbReference type="Reactome" id="R-RNO-380108">
    <property type="pathway name" value="Chemokine receptors bind chemokines"/>
</dbReference>
<dbReference type="Reactome" id="R-RNO-418594">
    <property type="pathway name" value="G alpha (i) signalling events"/>
</dbReference>
<dbReference type="PRO" id="PR:O89039"/>
<dbReference type="Proteomes" id="UP000002494">
    <property type="component" value="Chromosome 9"/>
</dbReference>
<dbReference type="Proteomes" id="UP000234681">
    <property type="component" value="Chromosome 9"/>
</dbReference>
<dbReference type="Bgee" id="ENSRNOG00000019622">
    <property type="expression patterns" value="Expressed in esophagus and 20 other cell types or tissues"/>
</dbReference>
<dbReference type="GO" id="GO:0009986">
    <property type="term" value="C:cell surface"/>
    <property type="evidence" value="ECO:0000250"/>
    <property type="project" value="UniProtKB"/>
</dbReference>
<dbReference type="GO" id="GO:0005905">
    <property type="term" value="C:clathrin-coated pit"/>
    <property type="evidence" value="ECO:0000250"/>
    <property type="project" value="UniProtKB"/>
</dbReference>
<dbReference type="GO" id="GO:0005769">
    <property type="term" value="C:early endosome"/>
    <property type="evidence" value="ECO:0007669"/>
    <property type="project" value="UniProtKB-SubCell"/>
</dbReference>
<dbReference type="GO" id="GO:0005768">
    <property type="term" value="C:endosome"/>
    <property type="evidence" value="ECO:0000250"/>
    <property type="project" value="UniProtKB"/>
</dbReference>
<dbReference type="GO" id="GO:0009897">
    <property type="term" value="C:external side of plasma membrane"/>
    <property type="evidence" value="ECO:0000318"/>
    <property type="project" value="GO_Central"/>
</dbReference>
<dbReference type="GO" id="GO:0005886">
    <property type="term" value="C:plasma membrane"/>
    <property type="evidence" value="ECO:0000250"/>
    <property type="project" value="UniProtKB"/>
</dbReference>
<dbReference type="GO" id="GO:0055037">
    <property type="term" value="C:recycling endosome"/>
    <property type="evidence" value="ECO:0007669"/>
    <property type="project" value="UniProtKB-SubCell"/>
</dbReference>
<dbReference type="GO" id="GO:0019957">
    <property type="term" value="F:C-C chemokine binding"/>
    <property type="evidence" value="ECO:0000318"/>
    <property type="project" value="GO_Central"/>
</dbReference>
<dbReference type="GO" id="GO:0016493">
    <property type="term" value="F:C-C chemokine receptor activity"/>
    <property type="evidence" value="ECO:0000318"/>
    <property type="project" value="GO_Central"/>
</dbReference>
<dbReference type="GO" id="GO:0019958">
    <property type="term" value="F:C-X-C chemokine binding"/>
    <property type="evidence" value="ECO:0000250"/>
    <property type="project" value="UniProtKB"/>
</dbReference>
<dbReference type="GO" id="GO:0016494">
    <property type="term" value="F:C-X-C chemokine receptor activity"/>
    <property type="evidence" value="ECO:0000266"/>
    <property type="project" value="RGD"/>
</dbReference>
<dbReference type="GO" id="GO:0015026">
    <property type="term" value="F:coreceptor activity"/>
    <property type="evidence" value="ECO:0007669"/>
    <property type="project" value="InterPro"/>
</dbReference>
<dbReference type="GO" id="GO:0005044">
    <property type="term" value="F:scavenger receptor activity"/>
    <property type="evidence" value="ECO:0000250"/>
    <property type="project" value="UniProtKB"/>
</dbReference>
<dbReference type="GO" id="GO:0001525">
    <property type="term" value="P:angiogenesis"/>
    <property type="evidence" value="ECO:0007669"/>
    <property type="project" value="InterPro"/>
</dbReference>
<dbReference type="GO" id="GO:0019722">
    <property type="term" value="P:calcium-mediated signaling"/>
    <property type="evidence" value="ECO:0000318"/>
    <property type="project" value="GO_Central"/>
</dbReference>
<dbReference type="GO" id="GO:0007155">
    <property type="term" value="P:cell adhesion"/>
    <property type="evidence" value="ECO:0007669"/>
    <property type="project" value="UniProtKB-KW"/>
</dbReference>
<dbReference type="GO" id="GO:0060326">
    <property type="term" value="P:cell chemotaxis"/>
    <property type="evidence" value="ECO:0000318"/>
    <property type="project" value="GO_Central"/>
</dbReference>
<dbReference type="GO" id="GO:0070098">
    <property type="term" value="P:chemokine-mediated signaling pathway"/>
    <property type="evidence" value="ECO:0000266"/>
    <property type="project" value="RGD"/>
</dbReference>
<dbReference type="GO" id="GO:0006955">
    <property type="term" value="P:immune response"/>
    <property type="evidence" value="ECO:0000318"/>
    <property type="project" value="GO_Central"/>
</dbReference>
<dbReference type="GO" id="GO:0008285">
    <property type="term" value="P:negative regulation of cell population proliferation"/>
    <property type="evidence" value="ECO:0000266"/>
    <property type="project" value="RGD"/>
</dbReference>
<dbReference type="GO" id="GO:1902230">
    <property type="term" value="P:negative regulation of intrinsic apoptotic signaling pathway in response to DNA damage"/>
    <property type="evidence" value="ECO:0000266"/>
    <property type="project" value="RGD"/>
</dbReference>
<dbReference type="GO" id="GO:0021557">
    <property type="term" value="P:oculomotor nerve development"/>
    <property type="evidence" value="ECO:0000250"/>
    <property type="project" value="UniProtKB"/>
</dbReference>
<dbReference type="GO" id="GO:0007204">
    <property type="term" value="P:positive regulation of cytosolic calcium ion concentration"/>
    <property type="evidence" value="ECO:0000318"/>
    <property type="project" value="GO_Central"/>
</dbReference>
<dbReference type="GO" id="GO:0070374">
    <property type="term" value="P:positive regulation of ERK1 and ERK2 cascade"/>
    <property type="evidence" value="ECO:0000250"/>
    <property type="project" value="UniProtKB"/>
</dbReference>
<dbReference type="GO" id="GO:1905322">
    <property type="term" value="P:positive regulation of mesenchymal stem cell migration"/>
    <property type="evidence" value="ECO:0000315"/>
    <property type="project" value="RGD"/>
</dbReference>
<dbReference type="GO" id="GO:0031623">
    <property type="term" value="P:receptor internalization"/>
    <property type="evidence" value="ECO:0000250"/>
    <property type="project" value="UniProtKB"/>
</dbReference>
<dbReference type="GO" id="GO:0001570">
    <property type="term" value="P:vasculogenesis"/>
    <property type="evidence" value="ECO:0007669"/>
    <property type="project" value="InterPro"/>
</dbReference>
<dbReference type="CDD" id="cd14987">
    <property type="entry name" value="7tmA_ACKR3_CXCR7"/>
    <property type="match status" value="1"/>
</dbReference>
<dbReference type="FunFam" id="1.20.1070.10:FF:000141">
    <property type="entry name" value="atypical chemokine receptor 3"/>
    <property type="match status" value="1"/>
</dbReference>
<dbReference type="Gene3D" id="1.20.1070.10">
    <property type="entry name" value="Rhodopsin 7-helix transmembrane proteins"/>
    <property type="match status" value="1"/>
</dbReference>
<dbReference type="InterPro" id="IPR001416">
    <property type="entry name" value="ACKR3"/>
</dbReference>
<dbReference type="InterPro" id="IPR000276">
    <property type="entry name" value="GPCR_Rhodpsn"/>
</dbReference>
<dbReference type="InterPro" id="IPR017452">
    <property type="entry name" value="GPCR_Rhodpsn_7TM"/>
</dbReference>
<dbReference type="InterPro" id="IPR047143">
    <property type="entry name" value="GPER1-like"/>
</dbReference>
<dbReference type="PANTHER" id="PTHR24226:SF5">
    <property type="entry name" value="CHEMOKINE (C-X-C MOTIF) RECEPTOR 7"/>
    <property type="match status" value="1"/>
</dbReference>
<dbReference type="PANTHER" id="PTHR24226">
    <property type="entry name" value="G-PROTEIN COUPLED RECEPTOR 182 AND ESTROGEN RECEPTOR 1"/>
    <property type="match status" value="1"/>
</dbReference>
<dbReference type="Pfam" id="PF00001">
    <property type="entry name" value="7tm_1"/>
    <property type="match status" value="1"/>
</dbReference>
<dbReference type="PRINTS" id="PR00237">
    <property type="entry name" value="GPCRRHODOPSN"/>
</dbReference>
<dbReference type="PRINTS" id="PR00646">
    <property type="entry name" value="RDC1ORPHANR"/>
</dbReference>
<dbReference type="SUPFAM" id="SSF81321">
    <property type="entry name" value="Family A G protein-coupled receptor-like"/>
    <property type="match status" value="1"/>
</dbReference>
<dbReference type="PROSITE" id="PS00237">
    <property type="entry name" value="G_PROTEIN_RECEP_F1_1"/>
    <property type="match status" value="1"/>
</dbReference>
<dbReference type="PROSITE" id="PS50262">
    <property type="entry name" value="G_PROTEIN_RECEP_F1_2"/>
    <property type="match status" value="1"/>
</dbReference>
<proteinExistence type="evidence at protein level"/>
<organism>
    <name type="scientific">Rattus norvegicus</name>
    <name type="common">Rat</name>
    <dbReference type="NCBI Taxonomy" id="10116"/>
    <lineage>
        <taxon>Eukaryota</taxon>
        <taxon>Metazoa</taxon>
        <taxon>Chordata</taxon>
        <taxon>Craniata</taxon>
        <taxon>Vertebrata</taxon>
        <taxon>Euteleostomi</taxon>
        <taxon>Mammalia</taxon>
        <taxon>Eutheria</taxon>
        <taxon>Euarchontoglires</taxon>
        <taxon>Glires</taxon>
        <taxon>Rodentia</taxon>
        <taxon>Myomorpha</taxon>
        <taxon>Muroidea</taxon>
        <taxon>Muridae</taxon>
        <taxon>Murinae</taxon>
        <taxon>Rattus</taxon>
    </lineage>
</organism>
<reference key="1">
    <citation type="submission" date="1998-09" db="EMBL/GenBank/DDBJ databases">
        <title>Investigation of the role of rat RDC-1 as a putative calcitonin gene-related peptide receptor.</title>
        <authorList>
            <person name="Mirtella A."/>
            <person name="Lowe S.R."/>
            <person name="Bartlett T.J."/>
            <person name="Drake W."/>
            <person name="Clark A.J."/>
        </authorList>
    </citation>
    <scope>NUCLEOTIDE SEQUENCE [MRNA]</scope>
    <source>
        <strain>Sprague-Dawley</strain>
        <tissue>Lung</tissue>
    </source>
</reference>
<reference key="2">
    <citation type="submission" date="1999-01" db="EMBL/GenBank/DDBJ databases">
        <authorList>
            <person name="Xie P."/>
            <person name="Fu A.K.Y."/>
            <person name="Ip N.Y."/>
        </authorList>
    </citation>
    <scope>NUCLEOTIDE SEQUENCE [MRNA]</scope>
    <source>
        <tissue>Muscle</tissue>
    </source>
</reference>
<reference key="3">
    <citation type="submission" date="2005-09" db="EMBL/GenBank/DDBJ databases">
        <authorList>
            <person name="Mural R.J."/>
            <person name="Adams M.D."/>
            <person name="Myers E.W."/>
            <person name="Smith H.O."/>
            <person name="Venter J.C."/>
        </authorList>
    </citation>
    <scope>NUCLEOTIDE SEQUENCE [LARGE SCALE GENOMIC DNA]</scope>
</reference>
<reference key="4">
    <citation type="journal article" date="2008" name="J. Comp. Neurol.">
        <title>Regional and cellular localization of the CXCl12/SDF-1 chemokine receptor CXCR7 in the developing and adult rat brain.</title>
        <authorList>
            <person name="Schonemeier B."/>
            <person name="Kolodziej A."/>
            <person name="Schulz S."/>
            <person name="Jacobs S."/>
            <person name="Hoellt V."/>
            <person name="Stumm R."/>
        </authorList>
    </citation>
    <scope>TISSUE SPECIFICITY</scope>
    <scope>DEVELOPMENTAL STAGE</scope>
</reference>
<reference key="5">
    <citation type="journal article" date="2008" name="J. Neuroimmunol.">
        <title>Enhanced expression of the CXCl12/SDF-1 chemokine receptor CXCR7 after cerebral ischemia in the rat brain.</title>
        <authorList>
            <person name="Schonemeier B."/>
            <person name="Schulz S."/>
            <person name="Hoellt V."/>
            <person name="Stumm R."/>
        </authorList>
    </citation>
    <scope>TISSUE SPECIFICITY</scope>
    <scope>INDUCTION</scope>
</reference>
<reference key="6">
    <citation type="journal article" date="2010" name="Proc. Natl. Acad. Sci. U.S.A.">
        <title>Beta-arrestin- but not G protein-mediated signaling by the 'decoy' receptor CXCR7.</title>
        <authorList>
            <person name="Rajagopal S."/>
            <person name="Kim J."/>
            <person name="Ahn S."/>
            <person name="Craig S."/>
            <person name="Lam C.M."/>
            <person name="Gerard N.P."/>
            <person name="Gerard C."/>
            <person name="Lefkowitz R.J."/>
        </authorList>
    </citation>
    <scope>FUNCTION</scope>
    <scope>TISSUE SPECIFICITY</scope>
</reference>
<reference key="7">
    <citation type="journal article" date="2011" name="PLoS ONE">
        <title>CXCR7 protein expression in human adult brain and differentiated neurons.</title>
        <authorList>
            <person name="Shimizu S."/>
            <person name="Brown M."/>
            <person name="Sengupta R."/>
            <person name="Penfold M.E."/>
            <person name="Meucci O."/>
        </authorList>
    </citation>
    <scope>SUBCELLULAR LOCATION</scope>
    <scope>TISSUE SPECIFICITY</scope>
</reference>
<reference key="8">
    <citation type="journal article" date="2012" name="Nat. Commun.">
        <title>Quantitative maps of protein phosphorylation sites across 14 different rat organs and tissues.</title>
        <authorList>
            <person name="Lundby A."/>
            <person name="Secher A."/>
            <person name="Lage K."/>
            <person name="Nordsborg N.B."/>
            <person name="Dmytriyev A."/>
            <person name="Lundby C."/>
            <person name="Olsen J.V."/>
        </authorList>
    </citation>
    <scope>PHOSPHORYLATION [LARGE SCALE ANALYSIS] AT SER-350</scope>
    <scope>IDENTIFICATION BY MASS SPECTROMETRY [LARGE SCALE ANALYSIS]</scope>
</reference>
<name>ACKR3_RAT</name>
<protein>
    <recommendedName>
        <fullName evidence="10">Atypical chemokine receptor 3</fullName>
    </recommendedName>
    <alternativeName>
        <fullName>C-X-C chemokine receptor type 7</fullName>
        <shortName>CXC-R7</shortName>
        <shortName>CXCR-7</shortName>
    </alternativeName>
    <alternativeName>
        <fullName>Chemokine orphan receptor 1</fullName>
    </alternativeName>
    <alternativeName>
        <fullName>G-protein coupled receptor RDC1 homolog</fullName>
        <shortName>RDC-1</shortName>
    </alternativeName>
</protein>
<accession>O89039</accession>
<accession>Q9JLZ0</accession>
<sequence length="362" mass="41650">MDVHLFDYVEPGNYSDINWPCNSSDCIVVDTVQCPAMPNKNVLLYTLSFIYIFIFVIGMIANSVVVWVNIQAKTTGYDTHCYILNLAIADLWVVITIPVWVVSLVQHNQWPMGELTCKITHLIFSINLFGSIFFLACMSVDRYLSITYFTSTSSYKKKMVRRVVCVLVWLLAFFVSLPDTYYLKTVTSASNNETYCRSFYPEHSIKEWLIGMELVSVILGFAVPFTIIAIFYFLLARAMSASGDQEKHSSRKIIFSYVVVFLVCWLPYHFVVLLDIFSILHYIPFTCQLENVLFTALHVTQCLSLVHCCVNPVLYSFINRNYRYELMKAFIFKYSAKTGLTKLIDASRVSETEYSALEQNTK</sequence>
<gene>
    <name evidence="12" type="primary">Ackr3</name>
    <name type="synonym">Cmkor1</name>
    <name type="synonym">Cxcr7</name>
    <name type="synonym">Rdc1</name>
</gene>
<evidence type="ECO:0000250" key="1"/>
<evidence type="ECO:0000250" key="2">
    <source>
        <dbReference type="UniProtKB" id="P25106"/>
    </source>
</evidence>
<evidence type="ECO:0000250" key="3">
    <source>
        <dbReference type="UniProtKB" id="P56485"/>
    </source>
</evidence>
<evidence type="ECO:0000255" key="4"/>
<evidence type="ECO:0000255" key="5">
    <source>
        <dbReference type="PROSITE-ProRule" id="PRU00521"/>
    </source>
</evidence>
<evidence type="ECO:0000269" key="6">
    <source>
    </source>
</evidence>
<evidence type="ECO:0000269" key="7">
    <source>
    </source>
</evidence>
<evidence type="ECO:0000269" key="8">
    <source>
    </source>
</evidence>
<evidence type="ECO:0000269" key="9">
    <source>
    </source>
</evidence>
<evidence type="ECO:0000305" key="10"/>
<evidence type="ECO:0000305" key="11">
    <source>
    </source>
</evidence>
<evidence type="ECO:0000312" key="12">
    <source>
        <dbReference type="RGD" id="620601"/>
    </source>
</evidence>
<evidence type="ECO:0007744" key="13">
    <source>
    </source>
</evidence>
<feature type="chain" id="PRO_0000070103" description="Atypical chemokine receptor 3">
    <location>
        <begin position="1"/>
        <end position="362"/>
    </location>
</feature>
<feature type="topological domain" description="Extracellular" evidence="4">
    <location>
        <begin position="1"/>
        <end position="47"/>
    </location>
</feature>
<feature type="transmembrane region" description="Helical; Name=1" evidence="4">
    <location>
        <begin position="48"/>
        <end position="68"/>
    </location>
</feature>
<feature type="topological domain" description="Cytoplasmic" evidence="4">
    <location>
        <begin position="69"/>
        <end position="81"/>
    </location>
</feature>
<feature type="transmembrane region" description="Helical; Name=2" evidence="4">
    <location>
        <begin position="82"/>
        <end position="102"/>
    </location>
</feature>
<feature type="topological domain" description="Extracellular" evidence="4">
    <location>
        <begin position="103"/>
        <end position="118"/>
    </location>
</feature>
<feature type="transmembrane region" description="Helical; Name=3" evidence="4">
    <location>
        <begin position="119"/>
        <end position="139"/>
    </location>
</feature>
<feature type="topological domain" description="Cytoplasmic" evidence="4">
    <location>
        <begin position="140"/>
        <end position="162"/>
    </location>
</feature>
<feature type="transmembrane region" description="Helical; Name=4" evidence="4">
    <location>
        <begin position="163"/>
        <end position="183"/>
    </location>
</feature>
<feature type="topological domain" description="Extracellular" evidence="4">
    <location>
        <begin position="184"/>
        <end position="213"/>
    </location>
</feature>
<feature type="transmembrane region" description="Helical; Name=5" evidence="4">
    <location>
        <begin position="214"/>
        <end position="234"/>
    </location>
</feature>
<feature type="topological domain" description="Cytoplasmic" evidence="4">
    <location>
        <begin position="235"/>
        <end position="252"/>
    </location>
</feature>
<feature type="transmembrane region" description="Helical; Name=6" evidence="4">
    <location>
        <begin position="253"/>
        <end position="273"/>
    </location>
</feature>
<feature type="topological domain" description="Extracellular" evidence="4">
    <location>
        <begin position="274"/>
        <end position="296"/>
    </location>
</feature>
<feature type="transmembrane region" description="Helical; Name=7" evidence="4">
    <location>
        <begin position="297"/>
        <end position="319"/>
    </location>
</feature>
<feature type="topological domain" description="Cytoplasmic" evidence="4">
    <location>
        <begin position="320"/>
        <end position="362"/>
    </location>
</feature>
<feature type="region of interest" description="C-terminal cytoplasmic tail" evidence="1">
    <location>
        <begin position="324"/>
        <end position="362"/>
    </location>
</feature>
<feature type="modified residue" description="Phosphoserine" evidence="3">
    <location>
        <position position="347"/>
    </location>
</feature>
<feature type="modified residue" description="Phosphoserine" evidence="13">
    <location>
        <position position="350"/>
    </location>
</feature>
<feature type="modified residue" description="Phosphoserine" evidence="3">
    <location>
        <position position="355"/>
    </location>
</feature>
<feature type="glycosylation site" description="N-linked (GlcNAc...) asparagine" evidence="4">
    <location>
        <position position="13"/>
    </location>
</feature>
<feature type="glycosylation site" description="N-linked (GlcNAc...) asparagine" evidence="4">
    <location>
        <position position="22"/>
    </location>
</feature>
<feature type="disulfide bond" evidence="5">
    <location>
        <begin position="117"/>
        <end position="196"/>
    </location>
</feature>
<feature type="sequence conflict" description="In Ref. 1; CAA09370." evidence="10" ref="1">
    <original>I</original>
    <variation>S</variation>
    <location>
        <position position="17"/>
    </location>
</feature>
<feature type="sequence conflict" description="In Ref. 1; CAA09370." evidence="10" ref="1">
    <original>R</original>
    <variation>L</variation>
    <location>
        <position position="161"/>
    </location>
</feature>
<feature type="sequence conflict" description="In Ref. 1; CAA09370." evidence="10" ref="1">
    <original>T</original>
    <variation>A</variation>
    <location>
        <position position="361"/>
    </location>
</feature>
<keyword id="KW-0130">Cell adhesion</keyword>
<keyword id="KW-1003">Cell membrane</keyword>
<keyword id="KW-0217">Developmental protein</keyword>
<keyword id="KW-1015">Disulfide bond</keyword>
<keyword id="KW-0967">Endosome</keyword>
<keyword id="KW-0297">G-protein coupled receptor</keyword>
<keyword id="KW-0325">Glycoprotein</keyword>
<keyword id="KW-0472">Membrane</keyword>
<keyword id="KW-0597">Phosphoprotein</keyword>
<keyword id="KW-0675">Receptor</keyword>
<keyword id="KW-1185">Reference proteome</keyword>
<keyword id="KW-0807">Transducer</keyword>
<keyword id="KW-0812">Transmembrane</keyword>
<keyword id="KW-1133">Transmembrane helix</keyword>
<keyword id="KW-0832">Ubl conjugation</keyword>
<comment type="function">
    <text evidence="8">Atypical chemokine receptor that controls chemokine levels and localization via high-affinity chemokine binding that is uncoupled from classic ligand-driven signal transduction cascades, resulting instead in chemokine sequestration, degradation, or transcytosis. Also known as interceptor (internalizing receptor) or chemokine-scavenging receptor or chemokine decoy receptor. Acts as a receptor for chemokines CXCL11 and CXCL12/SDF1. Chemokine binding does not activate G-protein-mediated signal transduction but instead induces beta-arrestin recruitment, leading to ligand internalization and activation of MAPK signaling pathway. Required for regulation of CXCR4 protein levels in migrating interneurons, thereby adapting their chemokine responsiveness. In glioma cells, transduces signals via MEK/ERK pathway, mediating resistance to apoptosis. Promotes cell growth and survival. Not involved in cell migration, adhesion or proliferation of normal hematopoietic progenitors but activated by CXCL11 in malignant hemapoietic cells, leading to phosphorylation of ERK1/2 (MAPK3/MAPK1) and enhanced cell adhesion and migration. Plays a regulatory role in CXCR4-mediated activation of cell surface integrins by CXCL12. Required for heart valve development.</text>
</comment>
<comment type="function">
    <text evidence="2 8">Atypical chemokine receptor that controls chemokine levels and localization via high-affinity chemokine binding that is uncoupled from classic ligand-driven signal transduction cascades, resulting instead in chemokine sequestration, degradation, or transcytosis. Also known as interceptor (internalizing receptor) or chemokine-scavenging receptor or chemokine decoy receptor. Acts as a receptor for chemokines CXCL11 and CXCL12/SDF1 (By similarity). Chemokine binding does not activate G-protein-mediated signal transduction but instead induces beta-arrestin recruitment, leading to ligand internalization and activation of MAPK signaling pathway (PubMed:20018651). Required for regulation of CXCR4 protein levels in migrating interneurons, thereby adapting their chemokine responsiveness. In glioma cells, transduces signals via MEK/ERK pathway, mediating resistance to apoptosis. Promotes cell growth and survival. Not involved in cell migration, adhesion or proliferation of normal hematopoietic progenitors but activated by CXCL11 in malignant hemapoietic cells, leading to phosphorylation of ERK1/2 (MAPK3/MAPK1) and enhanced cell adhesion and migration. Plays a regulatory role in CXCR4-mediated activation of cell surface integrins by CXCL12. Required for heart valve development. Regulates axon guidance in the oculomotor system through the regulation of CXCL12 levels (By similarity).</text>
</comment>
<comment type="subunit">
    <text evidence="2">Homodimer. Can form heterodimers with CXCR4; heterodimerization may regulate CXCR4 signaling activity. Interacts with ARRB1 and ARRB2.</text>
</comment>
<comment type="subcellular location">
    <subcellularLocation>
        <location evidence="9">Cell membrane</location>
        <topology evidence="9">Multi-pass membrane protein</topology>
    </subcellularLocation>
    <subcellularLocation>
        <location evidence="11">Early endosome</location>
    </subcellularLocation>
    <subcellularLocation>
        <location evidence="11">Recycling endosome</location>
    </subcellularLocation>
    <text evidence="2">Predominantly localizes to endocytic vesicles, and upon stimulation by the ligand is internalized via clathrin-coated pits in a beta-arrestin -dependent manner. Once internalized, the ligand dissociates from the receptor, and is targeted to degradation while the receptor is recycled back to the cell membrane (By similarity).</text>
</comment>
<comment type="tissue specificity">
    <text evidence="6 7 8 9">Expressed in vascular smooth muscle cells (at protein level). In brain, expressed in blood vessels, pyramidal cells in hippocampal subfield CA3, mature dentate gyrus granule cells, ventricle walls, olfactory bulb, accumbens shell, supraoptic, lateroanterior and ventromedial hypothalamic nuclei, medial region of thalamus, and motor nuclei, central gray and raphe magnus nucleus of brain stem. Detected in primary neurons, GABAergic neurons, astrocytes, cerebral cortex, ventral striatum and choroid plexus. Not detected in mesencephalon.</text>
</comment>
<comment type="developmental stage">
    <text evidence="7">Expressed in the ventral and dorsal parts of telencephalon at all developmental stages of brain analyzed (14 dpc to P56). Strong expression detected in the cranial connective tissue surrounding the brain at 14 dpc to 15 dpc. In the cortex, expressed mainly in the marginal zone at preplate stage (14 dpc), with expression increasing strongly in the marginal zone/layer I between 15 dpc and 18 dpc and declining rapidly in layer I after P0. Expression emerges in the lateral part of cortical plate at 15 dpc and increases in the medial and lateral parts between 15 dpc and 17 dpc. Expression not detected in the cortical ventricular and subventricular zones at the early embryonic stages but emerges at 18 dpc. Expressed in GABAergic precursors and in some reelin-expressing Cajal-Ratzius cells, in neurons forming the cortical plate and sparsely in the developing dentate gyrus and cerebellar external germinal layer. In the ventral telencephalon, expressed in the germinative zone of the ganglionic eminences and in GABAergic neurons forming the caudate putamen between 14 dpc and 18 dpc.</text>
</comment>
<comment type="induction">
    <text evidence="6">By ischemia. Up-regulated in the cingulate, retrosplenial and frontal areas of the cortex ipsilateral to middle cerebral artery occlusion (MCAO) by 163% at 6 hours, 220% at 2 days and 89% at 4 days after ischemia-onset, with expression reduced back to control level at 10 days after MCAO. Expression is almost undetectable in the infarct area between days 2 and 10 after MCAO.</text>
</comment>
<comment type="domain">
    <text evidence="2">The C-terminal cytoplasmic tail, plays a key role in: correct trafficking to the cell membrane, recruitment of beta-arrestin, ubiquitination, and in chemokine scavenging and signaling functions. The Ser/Thr residues and the Lys residues in the C-terminal cytoplasmic tail are essential for beta-arrestin recruitment and ubiquitination respectively.</text>
</comment>
<comment type="PTM">
    <text evidence="2">The Ser/Thr residues in the C-terminal cytoplasmic tail may be phosphorylated.</text>
</comment>
<comment type="PTM">
    <text evidence="2">Ubiquitinated at the Lys residues in its C-terminal cytoplasmic tail and is essential for correct trafficking from and to the cell membrane. Deubiquitinated by CXCL12-stimulation in a reversible manner.</text>
</comment>
<comment type="similarity">
    <text evidence="5">Belongs to the G-protein coupled receptor 1 family. Atypical chemokine receptor subfamily.</text>
</comment>